<feature type="chain" id="PRO_1000060058" description="tRNA modification GTPase MnmE">
    <location>
        <begin position="1"/>
        <end position="454"/>
    </location>
</feature>
<feature type="domain" description="TrmE-type G">
    <location>
        <begin position="216"/>
        <end position="377"/>
    </location>
</feature>
<feature type="binding site" evidence="1">
    <location>
        <position position="23"/>
    </location>
    <ligand>
        <name>(6S)-5-formyl-5,6,7,8-tetrahydrofolate</name>
        <dbReference type="ChEBI" id="CHEBI:57457"/>
    </ligand>
</feature>
<feature type="binding site" evidence="1">
    <location>
        <position position="80"/>
    </location>
    <ligand>
        <name>(6S)-5-formyl-5,6,7,8-tetrahydrofolate</name>
        <dbReference type="ChEBI" id="CHEBI:57457"/>
    </ligand>
</feature>
<feature type="binding site" evidence="1">
    <location>
        <position position="120"/>
    </location>
    <ligand>
        <name>(6S)-5-formyl-5,6,7,8-tetrahydrofolate</name>
        <dbReference type="ChEBI" id="CHEBI:57457"/>
    </ligand>
</feature>
<feature type="binding site" evidence="1">
    <location>
        <begin position="226"/>
        <end position="231"/>
    </location>
    <ligand>
        <name>GTP</name>
        <dbReference type="ChEBI" id="CHEBI:37565"/>
    </ligand>
</feature>
<feature type="binding site" evidence="1">
    <location>
        <position position="226"/>
    </location>
    <ligand>
        <name>K(+)</name>
        <dbReference type="ChEBI" id="CHEBI:29103"/>
    </ligand>
</feature>
<feature type="binding site" evidence="1">
    <location>
        <position position="230"/>
    </location>
    <ligand>
        <name>Mg(2+)</name>
        <dbReference type="ChEBI" id="CHEBI:18420"/>
    </ligand>
</feature>
<feature type="binding site" evidence="1">
    <location>
        <begin position="245"/>
        <end position="251"/>
    </location>
    <ligand>
        <name>GTP</name>
        <dbReference type="ChEBI" id="CHEBI:37565"/>
    </ligand>
</feature>
<feature type="binding site" evidence="1">
    <location>
        <position position="245"/>
    </location>
    <ligand>
        <name>K(+)</name>
        <dbReference type="ChEBI" id="CHEBI:29103"/>
    </ligand>
</feature>
<feature type="binding site" evidence="1">
    <location>
        <position position="247"/>
    </location>
    <ligand>
        <name>K(+)</name>
        <dbReference type="ChEBI" id="CHEBI:29103"/>
    </ligand>
</feature>
<feature type="binding site" evidence="1">
    <location>
        <position position="250"/>
    </location>
    <ligand>
        <name>K(+)</name>
        <dbReference type="ChEBI" id="CHEBI:29103"/>
    </ligand>
</feature>
<feature type="binding site" evidence="1">
    <location>
        <position position="251"/>
    </location>
    <ligand>
        <name>Mg(2+)</name>
        <dbReference type="ChEBI" id="CHEBI:18420"/>
    </ligand>
</feature>
<feature type="binding site" evidence="1">
    <location>
        <begin position="270"/>
        <end position="273"/>
    </location>
    <ligand>
        <name>GTP</name>
        <dbReference type="ChEBI" id="CHEBI:37565"/>
    </ligand>
</feature>
<feature type="binding site" evidence="1">
    <location>
        <begin position="335"/>
        <end position="338"/>
    </location>
    <ligand>
        <name>GTP</name>
        <dbReference type="ChEBI" id="CHEBI:37565"/>
    </ligand>
</feature>
<feature type="binding site" evidence="1">
    <location>
        <begin position="358"/>
        <end position="360"/>
    </location>
    <ligand>
        <name>GTP</name>
        <dbReference type="ChEBI" id="CHEBI:37565"/>
    </ligand>
</feature>
<feature type="binding site" evidence="1">
    <location>
        <position position="454"/>
    </location>
    <ligand>
        <name>(6S)-5-formyl-5,6,7,8-tetrahydrofolate</name>
        <dbReference type="ChEBI" id="CHEBI:57457"/>
    </ligand>
</feature>
<comment type="function">
    <text evidence="1">Exhibits a very high intrinsic GTPase hydrolysis rate. Involved in the addition of a carboxymethylaminomethyl (cmnm) group at the wobble position (U34) of certain tRNAs, forming tRNA-cmnm(5)s(2)U34.</text>
</comment>
<comment type="cofactor">
    <cofactor evidence="1">
        <name>K(+)</name>
        <dbReference type="ChEBI" id="CHEBI:29103"/>
    </cofactor>
    <text evidence="1">Binds 1 potassium ion per subunit.</text>
</comment>
<comment type="subunit">
    <text evidence="1">Homodimer. Heterotetramer of two MnmE and two MnmG subunits.</text>
</comment>
<comment type="subcellular location">
    <subcellularLocation>
        <location evidence="1">Cytoplasm</location>
    </subcellularLocation>
</comment>
<comment type="similarity">
    <text evidence="1">Belongs to the TRAFAC class TrmE-Era-EngA-EngB-Septin-like GTPase superfamily. TrmE GTPase family.</text>
</comment>
<sequence length="454" mass="49037">MSTTDTIVAQATPPGRGGVGILRVSGRAASEVAHAVLGKLPKPRYADYLPFKDVDGSTLDQGIALYFPGPNSFTGEDVLELQGHGGPVILDLLLKRILALPGLRIARPGEFSERAFLNDKLDLAQAEAIADLIDASSEQAARSAVNSLQGAFSARIHQLVEALTHLRIYVEAAIDFPDEEIDFLSDGKIEGQLNGVMADLEQVRTEARQGSLLREGMKVVIAGRPNAGKSSLLNALAGREAAIVTDIAGTTRDVLREHIHINGMPLHIIDTAGLREANDEVERIGIERAWNEIEQADRVLFMVDGTTTDATEPAAIWPEFMARLPATLPITVVRNKADITGETLGLTEVNGHSLIRLSARTGEGIDLLRDHLKQSMGFTSNTEGGFLARRRHLQALETAARHLIQGHEQLVSAYAGELLAEELRLAQQSLSEITGEFSSDDLLGRIFSSFCIGK</sequence>
<name>MNME_YERP3</name>
<proteinExistence type="inferred from homology"/>
<protein>
    <recommendedName>
        <fullName evidence="1">tRNA modification GTPase MnmE</fullName>
        <ecNumber evidence="1">3.6.-.-</ecNumber>
    </recommendedName>
</protein>
<organism>
    <name type="scientific">Yersinia pseudotuberculosis serotype O:1b (strain IP 31758)</name>
    <dbReference type="NCBI Taxonomy" id="349747"/>
    <lineage>
        <taxon>Bacteria</taxon>
        <taxon>Pseudomonadati</taxon>
        <taxon>Pseudomonadota</taxon>
        <taxon>Gammaproteobacteria</taxon>
        <taxon>Enterobacterales</taxon>
        <taxon>Yersiniaceae</taxon>
        <taxon>Yersinia</taxon>
    </lineage>
</organism>
<keyword id="KW-0963">Cytoplasm</keyword>
<keyword id="KW-0342">GTP-binding</keyword>
<keyword id="KW-0378">Hydrolase</keyword>
<keyword id="KW-0460">Magnesium</keyword>
<keyword id="KW-0479">Metal-binding</keyword>
<keyword id="KW-0547">Nucleotide-binding</keyword>
<keyword id="KW-0630">Potassium</keyword>
<keyword id="KW-0819">tRNA processing</keyword>
<accession>A7FPC2</accession>
<gene>
    <name evidence="1" type="primary">mnmE</name>
    <name evidence="1" type="synonym">trmE</name>
    <name type="ordered locus">YpsIP31758_4158</name>
</gene>
<reference key="1">
    <citation type="journal article" date="2007" name="PLoS Genet.">
        <title>The complete genome sequence of Yersinia pseudotuberculosis IP31758, the causative agent of Far East scarlet-like fever.</title>
        <authorList>
            <person name="Eppinger M."/>
            <person name="Rosovitz M.J."/>
            <person name="Fricke W.F."/>
            <person name="Rasko D.A."/>
            <person name="Kokorina G."/>
            <person name="Fayolle C."/>
            <person name="Lindler L.E."/>
            <person name="Carniel E."/>
            <person name="Ravel J."/>
        </authorList>
    </citation>
    <scope>NUCLEOTIDE SEQUENCE [LARGE SCALE GENOMIC DNA]</scope>
    <source>
        <strain>IP 31758</strain>
    </source>
</reference>
<dbReference type="EC" id="3.6.-.-" evidence="1"/>
<dbReference type="EMBL" id="CP000720">
    <property type="protein sequence ID" value="ABS48143.1"/>
    <property type="molecule type" value="Genomic_DNA"/>
</dbReference>
<dbReference type="RefSeq" id="WP_012105980.1">
    <property type="nucleotide sequence ID" value="NC_009708.1"/>
</dbReference>
<dbReference type="SMR" id="A7FPC2"/>
<dbReference type="KEGG" id="ypi:YpsIP31758_4158"/>
<dbReference type="HOGENOM" id="CLU_019624_4_1_6"/>
<dbReference type="Proteomes" id="UP000002412">
    <property type="component" value="Chromosome"/>
</dbReference>
<dbReference type="GO" id="GO:0005829">
    <property type="term" value="C:cytosol"/>
    <property type="evidence" value="ECO:0007669"/>
    <property type="project" value="TreeGrafter"/>
</dbReference>
<dbReference type="GO" id="GO:0005525">
    <property type="term" value="F:GTP binding"/>
    <property type="evidence" value="ECO:0007669"/>
    <property type="project" value="UniProtKB-UniRule"/>
</dbReference>
<dbReference type="GO" id="GO:0003924">
    <property type="term" value="F:GTPase activity"/>
    <property type="evidence" value="ECO:0007669"/>
    <property type="project" value="UniProtKB-UniRule"/>
</dbReference>
<dbReference type="GO" id="GO:0046872">
    <property type="term" value="F:metal ion binding"/>
    <property type="evidence" value="ECO:0007669"/>
    <property type="project" value="UniProtKB-KW"/>
</dbReference>
<dbReference type="GO" id="GO:0030488">
    <property type="term" value="P:tRNA methylation"/>
    <property type="evidence" value="ECO:0007669"/>
    <property type="project" value="TreeGrafter"/>
</dbReference>
<dbReference type="GO" id="GO:0002098">
    <property type="term" value="P:tRNA wobble uridine modification"/>
    <property type="evidence" value="ECO:0007669"/>
    <property type="project" value="TreeGrafter"/>
</dbReference>
<dbReference type="CDD" id="cd04164">
    <property type="entry name" value="trmE"/>
    <property type="match status" value="1"/>
</dbReference>
<dbReference type="CDD" id="cd14858">
    <property type="entry name" value="TrmE_N"/>
    <property type="match status" value="1"/>
</dbReference>
<dbReference type="FunFam" id="3.30.1360.120:FF:000001">
    <property type="entry name" value="tRNA modification GTPase MnmE"/>
    <property type="match status" value="1"/>
</dbReference>
<dbReference type="FunFam" id="3.40.50.300:FF:000249">
    <property type="entry name" value="tRNA modification GTPase MnmE"/>
    <property type="match status" value="1"/>
</dbReference>
<dbReference type="Gene3D" id="3.40.50.300">
    <property type="entry name" value="P-loop containing nucleotide triphosphate hydrolases"/>
    <property type="match status" value="1"/>
</dbReference>
<dbReference type="Gene3D" id="3.30.1360.120">
    <property type="entry name" value="Probable tRNA modification gtpase trme, domain 1"/>
    <property type="match status" value="1"/>
</dbReference>
<dbReference type="Gene3D" id="1.20.120.430">
    <property type="entry name" value="tRNA modification GTPase MnmE domain 2"/>
    <property type="match status" value="1"/>
</dbReference>
<dbReference type="HAMAP" id="MF_00379">
    <property type="entry name" value="GTPase_MnmE"/>
    <property type="match status" value="1"/>
</dbReference>
<dbReference type="InterPro" id="IPR031168">
    <property type="entry name" value="G_TrmE"/>
</dbReference>
<dbReference type="InterPro" id="IPR006073">
    <property type="entry name" value="GTP-bd"/>
</dbReference>
<dbReference type="InterPro" id="IPR018948">
    <property type="entry name" value="GTP-bd_TrmE_N"/>
</dbReference>
<dbReference type="InterPro" id="IPR004520">
    <property type="entry name" value="GTPase_MnmE"/>
</dbReference>
<dbReference type="InterPro" id="IPR027368">
    <property type="entry name" value="MnmE_dom2"/>
</dbReference>
<dbReference type="InterPro" id="IPR025867">
    <property type="entry name" value="MnmE_helical"/>
</dbReference>
<dbReference type="InterPro" id="IPR027417">
    <property type="entry name" value="P-loop_NTPase"/>
</dbReference>
<dbReference type="InterPro" id="IPR005225">
    <property type="entry name" value="Small_GTP-bd"/>
</dbReference>
<dbReference type="InterPro" id="IPR027266">
    <property type="entry name" value="TrmE/GcvT_dom1"/>
</dbReference>
<dbReference type="NCBIfam" id="TIGR00450">
    <property type="entry name" value="mnmE_trmE_thdF"/>
    <property type="match status" value="1"/>
</dbReference>
<dbReference type="NCBIfam" id="NF003661">
    <property type="entry name" value="PRK05291.1-3"/>
    <property type="match status" value="1"/>
</dbReference>
<dbReference type="NCBIfam" id="TIGR00231">
    <property type="entry name" value="small_GTP"/>
    <property type="match status" value="1"/>
</dbReference>
<dbReference type="PANTHER" id="PTHR42714">
    <property type="entry name" value="TRNA MODIFICATION GTPASE GTPBP3"/>
    <property type="match status" value="1"/>
</dbReference>
<dbReference type="PANTHER" id="PTHR42714:SF2">
    <property type="entry name" value="TRNA MODIFICATION GTPASE GTPBP3, MITOCHONDRIAL"/>
    <property type="match status" value="1"/>
</dbReference>
<dbReference type="Pfam" id="PF01926">
    <property type="entry name" value="MMR_HSR1"/>
    <property type="match status" value="1"/>
</dbReference>
<dbReference type="Pfam" id="PF12631">
    <property type="entry name" value="MnmE_helical"/>
    <property type="match status" value="1"/>
</dbReference>
<dbReference type="Pfam" id="PF10396">
    <property type="entry name" value="TrmE_N"/>
    <property type="match status" value="1"/>
</dbReference>
<dbReference type="SUPFAM" id="SSF52540">
    <property type="entry name" value="P-loop containing nucleoside triphosphate hydrolases"/>
    <property type="match status" value="1"/>
</dbReference>
<dbReference type="SUPFAM" id="SSF116878">
    <property type="entry name" value="TrmE connector domain"/>
    <property type="match status" value="1"/>
</dbReference>
<dbReference type="PROSITE" id="PS51709">
    <property type="entry name" value="G_TRME"/>
    <property type="match status" value="1"/>
</dbReference>
<evidence type="ECO:0000255" key="1">
    <source>
        <dbReference type="HAMAP-Rule" id="MF_00379"/>
    </source>
</evidence>